<keyword id="KW-0304">Gas vesicle</keyword>
<keyword id="KW-1185">Reference proteome</keyword>
<keyword id="KW-0677">Repeat</keyword>
<comment type="function">
    <text evidence="1">Confers stability, involved in shaping gas vesicles, hollow, gas filled proteinaceous nanostructures. During planktonic growth they allow positioning of the organism at a favorable depth for light or nutrient acquisition.</text>
</comment>
<comment type="function">
    <text evidence="2">Cluster expression in E.coli (gvpA1-gvpA2-gvpC-gvpN-gvpJ-gvpK-gvpF-gvpG-gvpV-gvpW) allows cells to float and produces irregularly shaped gas vesicles.</text>
</comment>
<comment type="subcellular location">
    <subcellularLocation>
        <location evidence="1">Gas vesicle</location>
    </subcellularLocation>
    <text evidence="1">Binds to the external surface of the gas vesicle.</text>
</comment>
<comment type="similarity">
    <text evidence="4">Belongs to the gas vesicle GvpC family.</text>
</comment>
<comment type="caution">
    <text evidence="2">Despite the presence of an intact gas vesicle cluster and gvpA transcripts, there is no evidence this strain produces gas vesicles.</text>
</comment>
<evidence type="ECO:0000250" key="1">
    <source>
        <dbReference type="UniProtKB" id="P09413"/>
    </source>
</evidence>
<evidence type="ECO:0000269" key="2">
    <source>
    </source>
</evidence>
<evidence type="ECO:0000303" key="3">
    <source>
    </source>
</evidence>
<evidence type="ECO:0000305" key="4"/>
<name>GVPC_NOSS1</name>
<reference key="1">
    <citation type="journal article" date="2001" name="DNA Res.">
        <title>Complete genomic sequence of the filamentous nitrogen-fixing cyanobacterium Anabaena sp. strain PCC 7120.</title>
        <authorList>
            <person name="Kaneko T."/>
            <person name="Nakamura Y."/>
            <person name="Wolk C.P."/>
            <person name="Kuritz T."/>
            <person name="Sasamoto S."/>
            <person name="Watanabe A."/>
            <person name="Iriguchi M."/>
            <person name="Ishikawa A."/>
            <person name="Kawashima K."/>
            <person name="Kimura T."/>
            <person name="Kishida Y."/>
            <person name="Kohara M."/>
            <person name="Matsumoto M."/>
            <person name="Matsuno A."/>
            <person name="Muraki A."/>
            <person name="Nakazaki N."/>
            <person name="Shimpo S."/>
            <person name="Sugimoto M."/>
            <person name="Takazawa M."/>
            <person name="Yamada M."/>
            <person name="Yasuda M."/>
            <person name="Tabata S."/>
        </authorList>
    </citation>
    <scope>NUCLEOTIDE SEQUENCE [LARGE SCALE GENOMIC DNA]</scope>
    <source>
        <strain>PCC 7120 / SAG 25.82 / UTEX 2576</strain>
    </source>
</reference>
<reference key="2">
    <citation type="journal article" date="2020" name="BMC Microbiol.">
        <title>The model cyanobacteria Anabaena sp. PCC 7120 possess an intact but partially degenerated gene cluster encoding gas vesicles.</title>
        <authorList>
            <person name="Cai K."/>
            <person name="Xu B.Y."/>
            <person name="Jiang Y.L."/>
            <person name="Wang Y."/>
            <person name="Chen Y."/>
            <person name="Zhou C.Z."/>
            <person name="Li Q."/>
        </authorList>
    </citation>
    <scope>LACK OF GAS VESICLES IN VIVO</scope>
    <scope>FUNCTION IN E.COLI</scope>
    <source>
        <strain>PCC 7120 / SAG 25.82 / UTEX 2576</strain>
    </source>
</reference>
<protein>
    <recommendedName>
        <fullName>Gas vesicle protein C</fullName>
        <shortName evidence="3">GvpC</shortName>
    </recommendedName>
</protein>
<organism>
    <name type="scientific">Nostoc sp. (strain PCC 7120 / SAG 25.82 / UTEX 2576)</name>
    <dbReference type="NCBI Taxonomy" id="103690"/>
    <lineage>
        <taxon>Bacteria</taxon>
        <taxon>Bacillati</taxon>
        <taxon>Cyanobacteriota</taxon>
        <taxon>Cyanophyceae</taxon>
        <taxon>Nostocales</taxon>
        <taxon>Nostocaceae</taxon>
        <taxon>Nostoc</taxon>
    </lineage>
</organism>
<feature type="chain" id="PRO_0000182664" description="Gas vesicle protein C">
    <location>
        <begin position="1"/>
        <end position="129"/>
    </location>
</feature>
<feature type="repeat">
    <location>
        <begin position="19"/>
        <end position="51"/>
    </location>
</feature>
<feature type="repeat">
    <location>
        <begin position="52"/>
        <end position="84"/>
    </location>
</feature>
<feature type="repeat">
    <location>
        <begin position="85"/>
        <end position="117"/>
    </location>
</feature>
<feature type="region of interest" description="3 X 33 AA tandem repeats">
    <location>
        <begin position="19"/>
        <end position="117"/>
    </location>
</feature>
<sequence length="129" mass="15219">MTALMVRIRQEHRSIAEEVTQLFRETHEFLSATTAHRQEQAKQQAQQLHQFHQNLEQTTHEFLTETTTQRVAQAEAQANFLHKFHQNLEQTTQEFLAETAKNRTEQAKAQSQYLQQFRKDLFASIFGTF</sequence>
<dbReference type="EMBL" id="BA000019">
    <property type="protein sequence ID" value="BAB73951.1"/>
    <property type="molecule type" value="Genomic_DNA"/>
</dbReference>
<dbReference type="PIR" id="AE2087">
    <property type="entry name" value="AE2087"/>
</dbReference>
<dbReference type="RefSeq" id="WP_010996410.1">
    <property type="nucleotide sequence ID" value="NZ_RSCN01000004.1"/>
</dbReference>
<dbReference type="SMR" id="Q8YUS9"/>
<dbReference type="STRING" id="103690.gene:10494281"/>
<dbReference type="KEGG" id="ana:all2252"/>
<dbReference type="eggNOG" id="ENOG503099I">
    <property type="taxonomic scope" value="Bacteria"/>
</dbReference>
<dbReference type="OrthoDB" id="461395at2"/>
<dbReference type="Proteomes" id="UP000002483">
    <property type="component" value="Chromosome"/>
</dbReference>
<dbReference type="GO" id="GO:0031411">
    <property type="term" value="C:gas vesicle"/>
    <property type="evidence" value="ECO:0007669"/>
    <property type="project" value="UniProtKB-SubCell"/>
</dbReference>
<dbReference type="GO" id="GO:0031412">
    <property type="term" value="P:gas vesicle organization"/>
    <property type="evidence" value="ECO:0007669"/>
    <property type="project" value="InterPro"/>
</dbReference>
<dbReference type="InterPro" id="IPR002003">
    <property type="entry name" value="Gas-vesicle_GvpC"/>
</dbReference>
<dbReference type="InterPro" id="IPR018185">
    <property type="entry name" value="Gas_vesicle_C_repeat"/>
</dbReference>
<dbReference type="NCBIfam" id="TIGR02641">
    <property type="entry name" value="gvpC_cyan_rpt"/>
    <property type="match status" value="3"/>
</dbReference>
<dbReference type="Pfam" id="PF01304">
    <property type="entry name" value="Gas_vesicle_C"/>
    <property type="match status" value="3"/>
</dbReference>
<dbReference type="PROSITE" id="PS00235">
    <property type="entry name" value="GAS_VESICLE_C"/>
    <property type="match status" value="3"/>
</dbReference>
<accession>Q8YUS9</accession>
<gene>
    <name evidence="3" type="primary">gvpC</name>
    <name type="ordered locus">all2252</name>
</gene>
<proteinExistence type="evidence at protein level"/>